<feature type="signal peptide" evidence="2">
    <location>
        <begin position="1"/>
        <end position="15"/>
    </location>
</feature>
<feature type="chain" id="PRO_0000001775" description="Autophagy-related protein 27">
    <location>
        <begin position="16"/>
        <end position="252"/>
    </location>
</feature>
<feature type="topological domain" description="Lumenal" evidence="2">
    <location>
        <begin position="16"/>
        <end position="176"/>
    </location>
</feature>
<feature type="transmembrane region" description="Helical" evidence="2">
    <location>
        <begin position="177"/>
        <end position="197"/>
    </location>
</feature>
<feature type="topological domain" description="Cytoplasmic" evidence="2">
    <location>
        <begin position="198"/>
        <end position="252"/>
    </location>
</feature>
<feature type="domain" description="MRH" evidence="3">
    <location>
        <begin position="16"/>
        <end position="161"/>
    </location>
</feature>
<feature type="glycosylation site" description="N-linked (GlcNAc...) asparagine" evidence="2">
    <location>
        <position position="49"/>
    </location>
</feature>
<feature type="disulfide bond" evidence="3">
    <location>
        <begin position="18"/>
        <end position="57"/>
    </location>
</feature>
<feature type="disulfide bond" evidence="3">
    <location>
        <begin position="66"/>
        <end position="73"/>
    </location>
</feature>
<feature type="disulfide bond" evidence="3">
    <location>
        <begin position="130"/>
        <end position="159"/>
    </location>
</feature>
<gene>
    <name evidence="5" type="primary">ATG27</name>
    <name type="ordered locus">CAALFM_C210470CA</name>
    <name type="ORF">CaO19.12782</name>
    <name type="ORF">CaO19.5322</name>
</gene>
<evidence type="ECO:0000250" key="1">
    <source>
        <dbReference type="UniProtKB" id="P46989"/>
    </source>
</evidence>
<evidence type="ECO:0000255" key="2"/>
<evidence type="ECO:0000255" key="3">
    <source>
        <dbReference type="PROSITE-ProRule" id="PRU01262"/>
    </source>
</evidence>
<evidence type="ECO:0000269" key="4">
    <source>
    </source>
</evidence>
<evidence type="ECO:0000303" key="5">
    <source>
    </source>
</evidence>
<evidence type="ECO:0000305" key="6"/>
<dbReference type="EMBL" id="CP017624">
    <property type="protein sequence ID" value="AOW28019.1"/>
    <property type="molecule type" value="Genomic_DNA"/>
</dbReference>
<dbReference type="RefSeq" id="XP_717125.1">
    <property type="nucleotide sequence ID" value="XM_712032.1"/>
</dbReference>
<dbReference type="FunCoup" id="Q5A5S7">
    <property type="interactions" value="83"/>
</dbReference>
<dbReference type="STRING" id="237561.Q5A5S7"/>
<dbReference type="GlyCosmos" id="Q5A5S7">
    <property type="glycosylation" value="1 site, No reported glycans"/>
</dbReference>
<dbReference type="EnsemblFungi" id="C2_10470C_A-T">
    <property type="protein sequence ID" value="C2_10470C_A-T-p1"/>
    <property type="gene ID" value="C2_10470C_A"/>
</dbReference>
<dbReference type="GeneID" id="3641196"/>
<dbReference type="KEGG" id="cal:CAALFM_C210470CA"/>
<dbReference type="CGD" id="CAL0000194879">
    <property type="gene designation" value="orf19.12782"/>
</dbReference>
<dbReference type="VEuPathDB" id="FungiDB:C2_10470C_A"/>
<dbReference type="eggNOG" id="ENOG502QVJJ">
    <property type="taxonomic scope" value="Eukaryota"/>
</dbReference>
<dbReference type="HOGENOM" id="CLU_047751_0_0_1"/>
<dbReference type="InParanoid" id="Q5A5S7"/>
<dbReference type="OMA" id="NKGNAID"/>
<dbReference type="OrthoDB" id="29460at2759"/>
<dbReference type="PRO" id="PR:Q5A5S7"/>
<dbReference type="Proteomes" id="UP000000559">
    <property type="component" value="Chromosome 2"/>
</dbReference>
<dbReference type="GO" id="GO:0030659">
    <property type="term" value="C:cytoplasmic vesicle membrane"/>
    <property type="evidence" value="ECO:0007669"/>
    <property type="project" value="UniProtKB-SubCell"/>
</dbReference>
<dbReference type="GO" id="GO:0000139">
    <property type="term" value="C:Golgi membrane"/>
    <property type="evidence" value="ECO:0007669"/>
    <property type="project" value="UniProtKB-SubCell"/>
</dbReference>
<dbReference type="GO" id="GO:0031966">
    <property type="term" value="C:mitochondrial membrane"/>
    <property type="evidence" value="ECO:0007669"/>
    <property type="project" value="UniProtKB-SubCell"/>
</dbReference>
<dbReference type="GO" id="GO:0034045">
    <property type="term" value="C:phagophore assembly site membrane"/>
    <property type="evidence" value="ECO:0007669"/>
    <property type="project" value="UniProtKB-SubCell"/>
</dbReference>
<dbReference type="GO" id="GO:0006914">
    <property type="term" value="P:autophagy"/>
    <property type="evidence" value="ECO:0007669"/>
    <property type="project" value="UniProtKB-KW"/>
</dbReference>
<dbReference type="GO" id="GO:0015031">
    <property type="term" value="P:protein transport"/>
    <property type="evidence" value="ECO:0007669"/>
    <property type="project" value="UniProtKB-KW"/>
</dbReference>
<dbReference type="FunFam" id="2.70.130.10:FF:000050">
    <property type="match status" value="1"/>
</dbReference>
<dbReference type="Gene3D" id="2.70.130.10">
    <property type="entry name" value="Mannose-6-phosphate receptor binding domain"/>
    <property type="match status" value="1"/>
</dbReference>
<dbReference type="InterPro" id="IPR018939">
    <property type="entry name" value="Autophagy-rel_prot_27"/>
</dbReference>
<dbReference type="InterPro" id="IPR009011">
    <property type="entry name" value="Man6P_isomerase_rcpt-bd_dom_sf"/>
</dbReference>
<dbReference type="InterPro" id="IPR044865">
    <property type="entry name" value="MRH_dom"/>
</dbReference>
<dbReference type="PANTHER" id="PTHR15071:SF13">
    <property type="entry name" value="AUTOPHAGY-RELATED PROTEIN 27"/>
    <property type="match status" value="1"/>
</dbReference>
<dbReference type="PANTHER" id="PTHR15071">
    <property type="entry name" value="MANNOSE-6-PHOSPHATE RECEPTOR FAMILY MEMBER"/>
    <property type="match status" value="1"/>
</dbReference>
<dbReference type="Pfam" id="PF09451">
    <property type="entry name" value="ATG27"/>
    <property type="match status" value="1"/>
</dbReference>
<dbReference type="SUPFAM" id="SSF50911">
    <property type="entry name" value="Mannose 6-phosphate receptor domain"/>
    <property type="match status" value="1"/>
</dbReference>
<dbReference type="PROSITE" id="PS51914">
    <property type="entry name" value="MRH"/>
    <property type="match status" value="1"/>
</dbReference>
<keyword id="KW-0072">Autophagy</keyword>
<keyword id="KW-0968">Cytoplasmic vesicle</keyword>
<keyword id="KW-1015">Disulfide bond</keyword>
<keyword id="KW-0325">Glycoprotein</keyword>
<keyword id="KW-0333">Golgi apparatus</keyword>
<keyword id="KW-0472">Membrane</keyword>
<keyword id="KW-0496">Mitochondrion</keyword>
<keyword id="KW-0653">Protein transport</keyword>
<keyword id="KW-1185">Reference proteome</keyword>
<keyword id="KW-0732">Signal</keyword>
<keyword id="KW-0812">Transmembrane</keyword>
<keyword id="KW-1133">Transmembrane helix</keyword>
<keyword id="KW-0813">Transport</keyword>
<name>ATG27_CANAL</name>
<organism>
    <name type="scientific">Candida albicans (strain SC5314 / ATCC MYA-2876)</name>
    <name type="common">Yeast</name>
    <dbReference type="NCBI Taxonomy" id="237561"/>
    <lineage>
        <taxon>Eukaryota</taxon>
        <taxon>Fungi</taxon>
        <taxon>Dikarya</taxon>
        <taxon>Ascomycota</taxon>
        <taxon>Saccharomycotina</taxon>
        <taxon>Pichiomycetes</taxon>
        <taxon>Debaryomycetaceae</taxon>
        <taxon>Candida/Lodderomyces clade</taxon>
        <taxon>Candida</taxon>
    </lineage>
</organism>
<sequence>MILASLLTFATAALAFDCSDKELERYNFESIKGVHSYTTLKNTPPSQTNVTWNVGICQPISAIKDCPANSDICGVTSILRKDEKPVVSEVVSFKSDLQKAYESSDNGIKVIYKGANWGDVLVNAELNFQCDKDSQNNEFTLDQWDGTNLKLSMKTKAACITSKEDKKKEKHDNGESWGWFTWIFIFLVLFLSIYIIGGAWFQYNKGNAIDFQSALKEVVENFIELLKGLPSFGKEIIEKFTGRSNRGEYSAV</sequence>
<proteinExistence type="evidence at transcript level"/>
<reference key="1">
    <citation type="journal article" date="2004" name="Proc. Natl. Acad. Sci. U.S.A.">
        <title>The diploid genome sequence of Candida albicans.</title>
        <authorList>
            <person name="Jones T."/>
            <person name="Federspiel N.A."/>
            <person name="Chibana H."/>
            <person name="Dungan J."/>
            <person name="Kalman S."/>
            <person name="Magee B.B."/>
            <person name="Newport G."/>
            <person name="Thorstenson Y.R."/>
            <person name="Agabian N."/>
            <person name="Magee P.T."/>
            <person name="Davis R.W."/>
            <person name="Scherer S."/>
        </authorList>
    </citation>
    <scope>NUCLEOTIDE SEQUENCE [LARGE SCALE GENOMIC DNA]</scope>
    <source>
        <strain>SC5314 / ATCC MYA-2876</strain>
    </source>
</reference>
<reference key="2">
    <citation type="journal article" date="2007" name="Genome Biol.">
        <title>Assembly of the Candida albicans genome into sixteen supercontigs aligned on the eight chromosomes.</title>
        <authorList>
            <person name="van het Hoog M."/>
            <person name="Rast T.J."/>
            <person name="Martchenko M."/>
            <person name="Grindle S."/>
            <person name="Dignard D."/>
            <person name="Hogues H."/>
            <person name="Cuomo C."/>
            <person name="Berriman M."/>
            <person name="Scherer S."/>
            <person name="Magee B.B."/>
            <person name="Whiteway M."/>
            <person name="Chibana H."/>
            <person name="Nantel A."/>
            <person name="Magee P.T."/>
        </authorList>
    </citation>
    <scope>GENOME REANNOTATION</scope>
    <source>
        <strain>SC5314 / ATCC MYA-2876</strain>
    </source>
</reference>
<reference key="3">
    <citation type="journal article" date="2013" name="Genome Biol.">
        <title>Assembly of a phased diploid Candida albicans genome facilitates allele-specific measurements and provides a simple model for repeat and indel structure.</title>
        <authorList>
            <person name="Muzzey D."/>
            <person name="Schwartz K."/>
            <person name="Weissman J.S."/>
            <person name="Sherlock G."/>
        </authorList>
    </citation>
    <scope>NUCLEOTIDE SEQUENCE [LARGE SCALE GENOMIC DNA]</scope>
    <scope>GENOME REANNOTATION</scope>
    <source>
        <strain>SC5314 / ATCC MYA-2876</strain>
    </source>
</reference>
<reference key="4">
    <citation type="journal article" date="2022" name="Biofouling">
        <title>Autophagy regulation of ATG13 and ATG27 on biofilm formation and antifungal resistance in Candida albicans.</title>
        <authorList>
            <person name="Liu S."/>
            <person name="Jiang L."/>
            <person name="Miao H."/>
            <person name="Lv Y."/>
            <person name="Zhang Q."/>
            <person name="Ma M."/>
            <person name="Duan W."/>
            <person name="Huang Y."/>
            <person name="Wei X."/>
        </authorList>
    </citation>
    <scope>INDUCTION</scope>
    <scope>FUNCTION</scope>
    <scope>DISRUPTION PHENOTYPE</scope>
</reference>
<comment type="function">
    <text evidence="1 4">Plays a key role in autophagy (PubMed:36476055). Effector of VPS34 phosphatidylinositol 3-phosphate kinase signaling (By similarity). Regulates the cytoplasm to vacuole transport (Cvt) vesicle formation (By similarity). Plays a role in ATG protein retrieval from the pre-autophagosomal structure (PAS) and is especially required for autophagy-dependent cycling of ATG9 (By similarity). Finally, plays an important role in biofilm formation and resistance to antifungal compounds such as fluconazole, itraconazole, terbinafine and caspofungin (PubMed:36476055).</text>
</comment>
<comment type="subcellular location">
    <subcellularLocation>
        <location evidence="1">Cytoplasmic vesicle membrane</location>
        <topology evidence="2">Single-pass type I membrane protein</topology>
    </subcellularLocation>
    <subcellularLocation>
        <location evidence="1">Golgi apparatus membrane</location>
        <topology evidence="2">Single-pass type I membrane protein</topology>
    </subcellularLocation>
    <subcellularLocation>
        <location evidence="1">Mitochondrion membrane</location>
        <topology evidence="2">Single-pass membrane protein</topology>
    </subcellularLocation>
    <subcellularLocation>
        <location evidence="1">Preautophagosomal structure membrane</location>
        <topology evidence="2">Single-pass type I membrane protein</topology>
    </subcellularLocation>
    <text evidence="1">Cycles among the pre-autophagosomal structure (PAS), mitochondria and Golgi.</text>
</comment>
<comment type="induction">
    <text evidence="4">Expression is induced during biofilm formation.</text>
</comment>
<comment type="disruption phenotype">
    <text evidence="4">Reduces the formation of biofilms (PubMed:36476055). Significantly decreases the resistance of biofilms to fluconazole, itraconazole, terbinafine and caspofungin (PubMed:36476055). Leads to autophagosomes with shrunken membranes with undefined edges (PubMed:36476055). Also results in partially dissolved contents of autophagosomes (PubMed:36476055).</text>
</comment>
<comment type="similarity">
    <text evidence="6">Belongs to the ATG27 family.</text>
</comment>
<protein>
    <recommendedName>
        <fullName evidence="5">Autophagy-related protein 27</fullName>
    </recommendedName>
</protein>
<accession>Q5A5S7</accession>
<accession>A0A1D8PIQ3</accession>